<accession>Q7A2S1</accession>
<protein>
    <recommendedName>
        <fullName>Phosphate-binding protein PstS</fullName>
        <shortName>PBP</shortName>
    </recommendedName>
</protein>
<dbReference type="EMBL" id="BA000017">
    <property type="protein sequence ID" value="BAB57551.1"/>
    <property type="molecule type" value="Genomic_DNA"/>
</dbReference>
<dbReference type="RefSeq" id="WP_000759232.1">
    <property type="nucleotide sequence ID" value="NC_002758.2"/>
</dbReference>
<dbReference type="SMR" id="Q7A2S1"/>
<dbReference type="KEGG" id="sav:SAV1389"/>
<dbReference type="HOGENOM" id="CLU_026228_1_1_9"/>
<dbReference type="PhylomeDB" id="Q7A2S1"/>
<dbReference type="Proteomes" id="UP000002481">
    <property type="component" value="Chromosome"/>
</dbReference>
<dbReference type="GO" id="GO:0005886">
    <property type="term" value="C:plasma membrane"/>
    <property type="evidence" value="ECO:0007669"/>
    <property type="project" value="UniProtKB-SubCell"/>
</dbReference>
<dbReference type="GO" id="GO:0042301">
    <property type="term" value="F:phosphate ion binding"/>
    <property type="evidence" value="ECO:0007669"/>
    <property type="project" value="InterPro"/>
</dbReference>
<dbReference type="GO" id="GO:0006817">
    <property type="term" value="P:phosphate ion transport"/>
    <property type="evidence" value="ECO:0007669"/>
    <property type="project" value="UniProtKB-KW"/>
</dbReference>
<dbReference type="CDD" id="cd13654">
    <property type="entry name" value="PBP2_phosphate_like_2"/>
    <property type="match status" value="1"/>
</dbReference>
<dbReference type="Gene3D" id="3.40.190.10">
    <property type="entry name" value="Periplasmic binding protein-like II"/>
    <property type="match status" value="2"/>
</dbReference>
<dbReference type="InterPro" id="IPR024370">
    <property type="entry name" value="PBP_domain"/>
</dbReference>
<dbReference type="InterPro" id="IPR011862">
    <property type="entry name" value="Phos-bd"/>
</dbReference>
<dbReference type="InterPro" id="IPR050811">
    <property type="entry name" value="Phosphate_ABC_transporter"/>
</dbReference>
<dbReference type="NCBIfam" id="TIGR02136">
    <property type="entry name" value="ptsS_2"/>
    <property type="match status" value="1"/>
</dbReference>
<dbReference type="PANTHER" id="PTHR30570">
    <property type="entry name" value="PERIPLASMIC PHOSPHATE BINDING COMPONENT OF PHOSPHATE ABC TRANSPORTER"/>
    <property type="match status" value="1"/>
</dbReference>
<dbReference type="PANTHER" id="PTHR30570:SF1">
    <property type="entry name" value="PHOSPHATE-BINDING PROTEIN PSTS"/>
    <property type="match status" value="1"/>
</dbReference>
<dbReference type="Pfam" id="PF12849">
    <property type="entry name" value="PBP_like_2"/>
    <property type="match status" value="1"/>
</dbReference>
<dbReference type="SUPFAM" id="SSF53850">
    <property type="entry name" value="Periplasmic binding protein-like II"/>
    <property type="match status" value="1"/>
</dbReference>
<dbReference type="PROSITE" id="PS51257">
    <property type="entry name" value="PROKAR_LIPOPROTEIN"/>
    <property type="match status" value="1"/>
</dbReference>
<name>PSTS_STAAM</name>
<feature type="signal peptide" evidence="2">
    <location>
        <begin position="1"/>
        <end position="20"/>
    </location>
</feature>
<feature type="chain" id="PRO_0000281657" description="Phosphate-binding protein PstS">
    <location>
        <begin position="21"/>
        <end position="327"/>
    </location>
</feature>
<feature type="region of interest" description="Disordered" evidence="3">
    <location>
        <begin position="307"/>
        <end position="327"/>
    </location>
</feature>
<feature type="lipid moiety-binding region" description="N-palmitoyl cysteine" evidence="2">
    <location>
        <position position="21"/>
    </location>
</feature>
<feature type="lipid moiety-binding region" description="S-diacylglycerol cysteine" evidence="2">
    <location>
        <position position="21"/>
    </location>
</feature>
<keyword id="KW-1003">Cell membrane</keyword>
<keyword id="KW-0449">Lipoprotein</keyword>
<keyword id="KW-0472">Membrane</keyword>
<keyword id="KW-0564">Palmitate</keyword>
<keyword id="KW-0592">Phosphate transport</keyword>
<keyword id="KW-0732">Signal</keyword>
<keyword id="KW-0813">Transport</keyword>
<comment type="function">
    <text evidence="1">Part of the ABC transporter complex PstSACB involved in phosphate import.</text>
</comment>
<comment type="subunit">
    <text evidence="4">The complex is composed of two ATP-binding proteins (PstB), two transmembrane proteins (PstC and PstA) and a solute-binding protein (PstS).</text>
</comment>
<comment type="subcellular location">
    <subcellularLocation>
        <location evidence="4">Cell membrane</location>
        <topology evidence="4">Lipid-anchor</topology>
    </subcellularLocation>
</comment>
<comment type="similarity">
    <text evidence="4">Belongs to the PstS family.</text>
</comment>
<organism>
    <name type="scientific">Staphylococcus aureus (strain Mu50 / ATCC 700699)</name>
    <dbReference type="NCBI Taxonomy" id="158878"/>
    <lineage>
        <taxon>Bacteria</taxon>
        <taxon>Bacillati</taxon>
        <taxon>Bacillota</taxon>
        <taxon>Bacilli</taxon>
        <taxon>Bacillales</taxon>
        <taxon>Staphylococcaceae</taxon>
        <taxon>Staphylococcus</taxon>
    </lineage>
</organism>
<evidence type="ECO:0000250" key="1"/>
<evidence type="ECO:0000255" key="2">
    <source>
        <dbReference type="PROSITE-ProRule" id="PRU00303"/>
    </source>
</evidence>
<evidence type="ECO:0000256" key="3">
    <source>
        <dbReference type="SAM" id="MobiDB-lite"/>
    </source>
</evidence>
<evidence type="ECO:0000305" key="4"/>
<reference key="1">
    <citation type="journal article" date="2001" name="Lancet">
        <title>Whole genome sequencing of meticillin-resistant Staphylococcus aureus.</title>
        <authorList>
            <person name="Kuroda M."/>
            <person name="Ohta T."/>
            <person name="Uchiyama I."/>
            <person name="Baba T."/>
            <person name="Yuzawa H."/>
            <person name="Kobayashi I."/>
            <person name="Cui L."/>
            <person name="Oguchi A."/>
            <person name="Aoki K."/>
            <person name="Nagai Y."/>
            <person name="Lian J.-Q."/>
            <person name="Ito T."/>
            <person name="Kanamori M."/>
            <person name="Matsumaru H."/>
            <person name="Maruyama A."/>
            <person name="Murakami H."/>
            <person name="Hosoyama A."/>
            <person name="Mizutani-Ui Y."/>
            <person name="Takahashi N.K."/>
            <person name="Sawano T."/>
            <person name="Inoue R."/>
            <person name="Kaito C."/>
            <person name="Sekimizu K."/>
            <person name="Hirakawa H."/>
            <person name="Kuhara S."/>
            <person name="Goto S."/>
            <person name="Yabuzaki J."/>
            <person name="Kanehisa M."/>
            <person name="Yamashita A."/>
            <person name="Oshima K."/>
            <person name="Furuya K."/>
            <person name="Yoshino C."/>
            <person name="Shiba T."/>
            <person name="Hattori M."/>
            <person name="Ogasawara N."/>
            <person name="Hayashi H."/>
            <person name="Hiramatsu K."/>
        </authorList>
    </citation>
    <scope>NUCLEOTIDE SEQUENCE [LARGE SCALE GENOMIC DNA]</scope>
    <source>
        <strain>Mu50 / ATCC 700699</strain>
    </source>
</reference>
<gene>
    <name type="primary">pstS</name>
    <name type="ordered locus">SAV1389</name>
</gene>
<sequence>MKKWQFVGTTALGATLLLGACGGGNGGSGNSDLKGEAKGDGSSTVAPIVEKLNEKWAQDHSDAKISAGQAGTGAGFQKFIAGDIDFADASRPIKDEEKQKLQDKNIKYKEFKIAQDGVTVAVNKENDFVDELDKQQLKAIYSGKAKTWKDVNSKWPDKKINAVSPNSSHGTYDFFENEVMNKEDIKAEKNADTNAIVSSVTKNKEGIGYFGYNFYVQNKDKLKEVKIKDENGKATEPTKKTIQDNSYALSRPLFIYVNEKALKDNKVMSEFIKFVLEDKGKAAEEAGYVAAPEKTYKSQLDDLKAFIDKNQKSDDKKSDDKKSEDKK</sequence>
<proteinExistence type="inferred from homology"/>